<organism>
    <name type="scientific">Teredinibacter turnerae (strain ATCC 39867 / T7901)</name>
    <dbReference type="NCBI Taxonomy" id="377629"/>
    <lineage>
        <taxon>Bacteria</taxon>
        <taxon>Pseudomonadati</taxon>
        <taxon>Pseudomonadota</taxon>
        <taxon>Gammaproteobacteria</taxon>
        <taxon>Cellvibrionales</taxon>
        <taxon>Cellvibrionaceae</taxon>
        <taxon>Teredinibacter</taxon>
    </lineage>
</organism>
<accession>C5BKJ4</accession>
<comment type="function">
    <text evidence="1">Produces ATP from ADP in the presence of a proton gradient across the membrane.</text>
</comment>
<comment type="subunit">
    <text evidence="1">F-type ATPases have 2 components, CF(1) - the catalytic core - and CF(0) - the membrane proton channel. CF(1) has five subunits: alpha(3), beta(3), gamma(1), delta(1), epsilon(1). CF(0) has three main subunits: a, b and c.</text>
</comment>
<comment type="subcellular location">
    <subcellularLocation>
        <location evidence="1">Cell inner membrane</location>
        <topology evidence="1">Peripheral membrane protein</topology>
    </subcellularLocation>
</comment>
<comment type="similarity">
    <text evidence="1">Belongs to the ATPase epsilon chain family.</text>
</comment>
<feature type="chain" id="PRO_1000211794" description="ATP synthase epsilon chain">
    <location>
        <begin position="1"/>
        <end position="141"/>
    </location>
</feature>
<protein>
    <recommendedName>
        <fullName evidence="1">ATP synthase epsilon chain</fullName>
    </recommendedName>
    <alternativeName>
        <fullName evidence="1">ATP synthase F1 sector epsilon subunit</fullName>
    </alternativeName>
    <alternativeName>
        <fullName evidence="1">F-ATPase epsilon subunit</fullName>
    </alternativeName>
</protein>
<keyword id="KW-0066">ATP synthesis</keyword>
<keyword id="KW-0997">Cell inner membrane</keyword>
<keyword id="KW-1003">Cell membrane</keyword>
<keyword id="KW-0139">CF(1)</keyword>
<keyword id="KW-0375">Hydrogen ion transport</keyword>
<keyword id="KW-0406">Ion transport</keyword>
<keyword id="KW-0472">Membrane</keyword>
<keyword id="KW-1185">Reference proteome</keyword>
<keyword id="KW-0813">Transport</keyword>
<name>ATPE_TERTT</name>
<sequence>MALTIHCNIVSAEQEIFSGLVELLVAAATEGDVGIGYGHAPFLSALKPGPVRVKKQSGDEEIFYVSGGYLEVQPESINVLADTALRADDMDEASAEAAKKEAEEALASQTGDGIDYSKAAARLAEAAAQLRTLQAIRKRAR</sequence>
<evidence type="ECO:0000255" key="1">
    <source>
        <dbReference type="HAMAP-Rule" id="MF_00530"/>
    </source>
</evidence>
<dbReference type="EMBL" id="CP001614">
    <property type="protein sequence ID" value="ACR11616.1"/>
    <property type="molecule type" value="Genomic_DNA"/>
</dbReference>
<dbReference type="RefSeq" id="WP_015817728.1">
    <property type="nucleotide sequence ID" value="NC_012997.1"/>
</dbReference>
<dbReference type="SMR" id="C5BKJ4"/>
<dbReference type="STRING" id="377629.TERTU_4715"/>
<dbReference type="KEGG" id="ttu:TERTU_4715"/>
<dbReference type="eggNOG" id="COG0355">
    <property type="taxonomic scope" value="Bacteria"/>
</dbReference>
<dbReference type="HOGENOM" id="CLU_084338_2_0_6"/>
<dbReference type="OrthoDB" id="9791445at2"/>
<dbReference type="Proteomes" id="UP000009080">
    <property type="component" value="Chromosome"/>
</dbReference>
<dbReference type="GO" id="GO:0005886">
    <property type="term" value="C:plasma membrane"/>
    <property type="evidence" value="ECO:0007669"/>
    <property type="project" value="UniProtKB-SubCell"/>
</dbReference>
<dbReference type="GO" id="GO:0045259">
    <property type="term" value="C:proton-transporting ATP synthase complex"/>
    <property type="evidence" value="ECO:0007669"/>
    <property type="project" value="UniProtKB-KW"/>
</dbReference>
<dbReference type="GO" id="GO:0005524">
    <property type="term" value="F:ATP binding"/>
    <property type="evidence" value="ECO:0007669"/>
    <property type="project" value="UniProtKB-UniRule"/>
</dbReference>
<dbReference type="GO" id="GO:0046933">
    <property type="term" value="F:proton-transporting ATP synthase activity, rotational mechanism"/>
    <property type="evidence" value="ECO:0007669"/>
    <property type="project" value="UniProtKB-UniRule"/>
</dbReference>
<dbReference type="CDD" id="cd12152">
    <property type="entry name" value="F1-ATPase_delta"/>
    <property type="match status" value="1"/>
</dbReference>
<dbReference type="FunFam" id="2.60.15.10:FF:000001">
    <property type="entry name" value="ATP synthase epsilon chain"/>
    <property type="match status" value="1"/>
</dbReference>
<dbReference type="Gene3D" id="1.20.5.440">
    <property type="entry name" value="ATP synthase delta/epsilon subunit, C-terminal domain"/>
    <property type="match status" value="1"/>
</dbReference>
<dbReference type="Gene3D" id="2.60.15.10">
    <property type="entry name" value="F0F1 ATP synthase delta/epsilon subunit, N-terminal"/>
    <property type="match status" value="1"/>
</dbReference>
<dbReference type="HAMAP" id="MF_00530">
    <property type="entry name" value="ATP_synth_epsil_bac"/>
    <property type="match status" value="1"/>
</dbReference>
<dbReference type="InterPro" id="IPR036794">
    <property type="entry name" value="ATP_F1_dsu/esu_C_sf"/>
</dbReference>
<dbReference type="InterPro" id="IPR001469">
    <property type="entry name" value="ATP_synth_F1_dsu/esu"/>
</dbReference>
<dbReference type="InterPro" id="IPR020546">
    <property type="entry name" value="ATP_synth_F1_dsu/esu_N"/>
</dbReference>
<dbReference type="InterPro" id="IPR020547">
    <property type="entry name" value="ATP_synth_F1_esu_C"/>
</dbReference>
<dbReference type="InterPro" id="IPR036771">
    <property type="entry name" value="ATPsynth_dsu/esu_N"/>
</dbReference>
<dbReference type="NCBIfam" id="TIGR01216">
    <property type="entry name" value="ATP_synt_epsi"/>
    <property type="match status" value="1"/>
</dbReference>
<dbReference type="NCBIfam" id="NF001847">
    <property type="entry name" value="PRK00571.1-4"/>
    <property type="match status" value="1"/>
</dbReference>
<dbReference type="PANTHER" id="PTHR13822">
    <property type="entry name" value="ATP SYNTHASE DELTA/EPSILON CHAIN"/>
    <property type="match status" value="1"/>
</dbReference>
<dbReference type="PANTHER" id="PTHR13822:SF10">
    <property type="entry name" value="ATP SYNTHASE EPSILON CHAIN, CHLOROPLASTIC"/>
    <property type="match status" value="1"/>
</dbReference>
<dbReference type="Pfam" id="PF00401">
    <property type="entry name" value="ATP-synt_DE"/>
    <property type="match status" value="1"/>
</dbReference>
<dbReference type="Pfam" id="PF02823">
    <property type="entry name" value="ATP-synt_DE_N"/>
    <property type="match status" value="1"/>
</dbReference>
<dbReference type="SUPFAM" id="SSF46604">
    <property type="entry name" value="Epsilon subunit of F1F0-ATP synthase C-terminal domain"/>
    <property type="match status" value="1"/>
</dbReference>
<dbReference type="SUPFAM" id="SSF51344">
    <property type="entry name" value="Epsilon subunit of F1F0-ATP synthase N-terminal domain"/>
    <property type="match status" value="1"/>
</dbReference>
<proteinExistence type="inferred from homology"/>
<gene>
    <name evidence="1" type="primary">atpC</name>
    <name type="ordered locus">TERTU_4715</name>
</gene>
<reference key="1">
    <citation type="journal article" date="2009" name="PLoS ONE">
        <title>The complete genome of Teredinibacter turnerae T7901: an intracellular endosymbiont of marine wood-boring bivalves (shipworms).</title>
        <authorList>
            <person name="Yang J.C."/>
            <person name="Madupu R."/>
            <person name="Durkin A.S."/>
            <person name="Ekborg N.A."/>
            <person name="Pedamallu C.S."/>
            <person name="Hostetler J.B."/>
            <person name="Radune D."/>
            <person name="Toms B.S."/>
            <person name="Henrissat B."/>
            <person name="Coutinho P.M."/>
            <person name="Schwarz S."/>
            <person name="Field L."/>
            <person name="Trindade-Silva A.E."/>
            <person name="Soares C.A.G."/>
            <person name="Elshahawi S."/>
            <person name="Hanora A."/>
            <person name="Schmidt E.W."/>
            <person name="Haygood M.G."/>
            <person name="Posfai J."/>
            <person name="Benner J."/>
            <person name="Madinger C."/>
            <person name="Nove J."/>
            <person name="Anton B."/>
            <person name="Chaudhary K."/>
            <person name="Foster J."/>
            <person name="Holman A."/>
            <person name="Kumar S."/>
            <person name="Lessard P.A."/>
            <person name="Luyten Y.A."/>
            <person name="Slatko B."/>
            <person name="Wood N."/>
            <person name="Wu B."/>
            <person name="Teplitski M."/>
            <person name="Mougous J.D."/>
            <person name="Ward N."/>
            <person name="Eisen J.A."/>
            <person name="Badger J.H."/>
            <person name="Distel D.L."/>
        </authorList>
    </citation>
    <scope>NUCLEOTIDE SEQUENCE [LARGE SCALE GENOMIC DNA]</scope>
    <source>
        <strain>ATCC 39867 / T7901</strain>
    </source>
</reference>